<evidence type="ECO:0000250" key="1">
    <source>
        <dbReference type="UniProtKB" id="Q92410"/>
    </source>
</evidence>
<evidence type="ECO:0000269" key="2">
    <source>
    </source>
</evidence>
<evidence type="ECO:0000303" key="3">
    <source>
    </source>
</evidence>
<evidence type="ECO:0000305" key="4"/>
<evidence type="ECO:0000305" key="5">
    <source>
    </source>
</evidence>
<name>TPS1_PICAN</name>
<comment type="function">
    <text evidence="2">Synthase catalytic subunit of the trehalose synthase complex that catalyzes the production of trehalose from glucose-6-phosphate and UDP-alpha-D-glucose in a two step process.</text>
</comment>
<comment type="catalytic activity">
    <reaction evidence="5">
        <text>D-glucose 6-phosphate + UDP-alpha-D-glucose = alpha,alpha-trehalose 6-phosphate + UDP + H(+)</text>
        <dbReference type="Rhea" id="RHEA:18889"/>
        <dbReference type="ChEBI" id="CHEBI:15378"/>
        <dbReference type="ChEBI" id="CHEBI:58223"/>
        <dbReference type="ChEBI" id="CHEBI:58429"/>
        <dbReference type="ChEBI" id="CHEBI:58885"/>
        <dbReference type="ChEBI" id="CHEBI:61548"/>
        <dbReference type="EC" id="2.4.1.15"/>
    </reaction>
</comment>
<comment type="pathway">
    <text evidence="4">Carbohydrate biosynthesis.</text>
</comment>
<comment type="induction">
    <text evidence="2">Induced during thermal stress (at protein level).</text>
</comment>
<comment type="disruption phenotype">
    <text evidence="2">Abolishes trehalose biosynthesis.</text>
</comment>
<comment type="similarity">
    <text evidence="4">Belongs to the glycosyltransferase 20 family.</text>
</comment>
<keyword id="KW-0328">Glycosyltransferase</keyword>
<keyword id="KW-0808">Transferase</keyword>
<organism>
    <name type="scientific">Pichia angusta</name>
    <name type="common">Yeast</name>
    <name type="synonym">Hansenula polymorpha</name>
    <dbReference type="NCBI Taxonomy" id="870730"/>
    <lineage>
        <taxon>Eukaryota</taxon>
        <taxon>Fungi</taxon>
        <taxon>Dikarya</taxon>
        <taxon>Ascomycota</taxon>
        <taxon>Saccharomycotina</taxon>
        <taxon>Pichiomycetes</taxon>
        <taxon>Pichiales</taxon>
        <taxon>Pichiaceae</taxon>
        <taxon>Ogataea</taxon>
    </lineage>
</organism>
<proteinExistence type="evidence at protein level"/>
<feature type="chain" id="PRO_0000122499" description="Alpha,alpha-trehalose-phosphate synthase [UDP-forming]">
    <location>
        <begin position="1"/>
        <end position="475"/>
    </location>
</feature>
<feature type="binding site" evidence="1">
    <location>
        <position position="93"/>
    </location>
    <ligand>
        <name>D-glucose 6-phosphate</name>
        <dbReference type="ChEBI" id="CHEBI:61548"/>
    </ligand>
</feature>
<feature type="binding site" evidence="1">
    <location>
        <position position="147"/>
    </location>
    <ligand>
        <name>D-glucose 6-phosphate</name>
        <dbReference type="ChEBI" id="CHEBI:61548"/>
    </ligand>
</feature>
<feature type="binding site" evidence="1">
    <location>
        <position position="285"/>
    </location>
    <ligand>
        <name>UDP</name>
        <dbReference type="ChEBI" id="CHEBI:58223"/>
    </ligand>
</feature>
<feature type="binding site" evidence="1">
    <location>
        <position position="285"/>
    </location>
    <ligand>
        <name>UDP-alpha-D-glucose</name>
        <dbReference type="ChEBI" id="CHEBI:58885"/>
    </ligand>
</feature>
<feature type="binding site" evidence="1">
    <location>
        <position position="290"/>
    </location>
    <ligand>
        <name>UDP</name>
        <dbReference type="ChEBI" id="CHEBI:58223"/>
    </ligand>
</feature>
<feature type="binding site" evidence="1">
    <location>
        <position position="290"/>
    </location>
    <ligand>
        <name>UDP-alpha-D-glucose</name>
        <dbReference type="ChEBI" id="CHEBI:58885"/>
    </ligand>
</feature>
<feature type="binding site" evidence="1">
    <location>
        <position position="323"/>
    </location>
    <ligand>
        <name>D-glucose 6-phosphate</name>
        <dbReference type="ChEBI" id="CHEBI:61548"/>
    </ligand>
</feature>
<feature type="binding site" evidence="1">
    <location>
        <begin position="384"/>
        <end position="392"/>
    </location>
    <ligand>
        <name>UDP-alpha-D-glucose</name>
        <dbReference type="ChEBI" id="CHEBI:58885"/>
    </ligand>
</feature>
<feature type="binding site" evidence="1">
    <location>
        <begin position="388"/>
        <end position="392"/>
    </location>
    <ligand>
        <name>UDP</name>
        <dbReference type="ChEBI" id="CHEBI:58223"/>
    </ligand>
</feature>
<gene>
    <name evidence="3" type="primary">TPS1</name>
</gene>
<sequence length="475" mass="54407">MVKGNVIVVSNRIPVTIKKTEDDENGKSRYDYTMSSGGLVTALQGLKNPFRWFGWPGMSVDSEQGRQTVERDLKEKFNCYPIWLSDEIADLHYNGFSNSILWPLFHYHPGEMNFDEIAWAAYLEANKLFCQTILKEIKDGDVIWVHDYHLMLLPSLLRDQLNSKGLPNVKIGFFLHTPFPSSEIYRILPVRKEILEGVLSCDLIGFHTYDYVRHFLSSVERILKLRTSPQGVVYNDRQVTVSAYPIGIDVDKFLNGLKTDEVKSRIKQLETRFGKDCKLIIGVDRLDYIKGVPQKLHAFEIFLERHPEWIGKVVLIQVAVPSRGDVEEYQSLRAAVNELVGRINGRFGTVEFVPIHFLHKSVNFQELISVYAASDVCVVSSTRDGMNLVSYEYIACQQDRKGSLVLSEFAGAAQSLNGALVVNPWNTEELSEAIYEGLIMSEEKRRGNFQKMFKYIEKYTASYWGENFVKELTRV</sequence>
<protein>
    <recommendedName>
        <fullName>Alpha,alpha-trehalose-phosphate synthase [UDP-forming]</fullName>
        <ecNumber evidence="5">2.4.1.15</ecNumber>
    </recommendedName>
    <alternativeName>
        <fullName>Trehalose-6-phosphate synthase</fullName>
    </alternativeName>
    <alternativeName>
        <fullName>UDP-glucose-glucosephosphate glucosyltransferase</fullName>
    </alternativeName>
</protein>
<dbReference type="EC" id="2.4.1.15" evidence="5"/>
<dbReference type="EMBL" id="AJ010725">
    <property type="protein sequence ID" value="CAB38058.1"/>
    <property type="molecule type" value="Genomic_DNA"/>
</dbReference>
<dbReference type="SMR" id="O94213"/>
<dbReference type="CAZy" id="GT20">
    <property type="family name" value="Glycosyltransferase Family 20"/>
</dbReference>
<dbReference type="PhylomeDB" id="O94213"/>
<dbReference type="GO" id="GO:0005946">
    <property type="term" value="C:alpha,alpha-trehalose-phosphate synthase complex (UDP-forming)"/>
    <property type="evidence" value="ECO:0007669"/>
    <property type="project" value="TreeGrafter"/>
</dbReference>
<dbReference type="GO" id="GO:0005829">
    <property type="term" value="C:cytosol"/>
    <property type="evidence" value="ECO:0007669"/>
    <property type="project" value="TreeGrafter"/>
</dbReference>
<dbReference type="GO" id="GO:0003825">
    <property type="term" value="F:alpha,alpha-trehalose-phosphate synthase (UDP-forming) activity"/>
    <property type="evidence" value="ECO:0007669"/>
    <property type="project" value="UniProtKB-EC"/>
</dbReference>
<dbReference type="GO" id="GO:0102986">
    <property type="term" value="F:trehalose synthase activity"/>
    <property type="evidence" value="ECO:0000316"/>
    <property type="project" value="UniProtKB"/>
</dbReference>
<dbReference type="GO" id="GO:0004805">
    <property type="term" value="F:trehalose-phosphatase activity"/>
    <property type="evidence" value="ECO:0007669"/>
    <property type="project" value="TreeGrafter"/>
</dbReference>
<dbReference type="GO" id="GO:0034605">
    <property type="term" value="P:cellular response to heat"/>
    <property type="evidence" value="ECO:0007669"/>
    <property type="project" value="TreeGrafter"/>
</dbReference>
<dbReference type="GO" id="GO:0005992">
    <property type="term" value="P:trehalose biosynthetic process"/>
    <property type="evidence" value="ECO:0000316"/>
    <property type="project" value="UniProtKB"/>
</dbReference>
<dbReference type="CDD" id="cd03788">
    <property type="entry name" value="GT20_TPS"/>
    <property type="match status" value="1"/>
</dbReference>
<dbReference type="FunFam" id="3.40.50.2000:FF:000007">
    <property type="entry name" value="Trehalose-6-phosphate synthase"/>
    <property type="match status" value="1"/>
</dbReference>
<dbReference type="FunFam" id="3.40.50.2000:FF:000035">
    <property type="entry name" value="Trehalose-6-phosphate synthase"/>
    <property type="match status" value="1"/>
</dbReference>
<dbReference type="Gene3D" id="3.40.50.2000">
    <property type="entry name" value="Glycogen Phosphorylase B"/>
    <property type="match status" value="2"/>
</dbReference>
<dbReference type="InterPro" id="IPR001830">
    <property type="entry name" value="Glyco_trans_20"/>
</dbReference>
<dbReference type="InterPro" id="IPR012766">
    <property type="entry name" value="Trehalose_OtsA"/>
</dbReference>
<dbReference type="NCBIfam" id="TIGR02400">
    <property type="entry name" value="trehalose_OtsA"/>
    <property type="match status" value="1"/>
</dbReference>
<dbReference type="PANTHER" id="PTHR10788:SF106">
    <property type="entry name" value="BCDNA.GH08860"/>
    <property type="match status" value="1"/>
</dbReference>
<dbReference type="PANTHER" id="PTHR10788">
    <property type="entry name" value="TREHALOSE-6-PHOSPHATE SYNTHASE"/>
    <property type="match status" value="1"/>
</dbReference>
<dbReference type="Pfam" id="PF00982">
    <property type="entry name" value="Glyco_transf_20"/>
    <property type="match status" value="1"/>
</dbReference>
<dbReference type="SUPFAM" id="SSF53756">
    <property type="entry name" value="UDP-Glycosyltransferase/glycogen phosphorylase"/>
    <property type="match status" value="1"/>
</dbReference>
<accession>O94213</accession>
<reference key="1">
    <citation type="journal article" date="1999" name="J. Bacteriol.">
        <title>The thermophilic yeast hansenula polymorpha does not require trehalose synthesis for growth at high temperatures but does for normal acquisition of thermotolerance.</title>
        <authorList>
            <person name="Reinders A."/>
            <person name="Romano I."/>
            <person name="Wiemken A."/>
            <person name="De Virgilio C."/>
        </authorList>
    </citation>
    <scope>NUCLEOTIDE SEQUENCE [GENOMIC DNA]</scope>
    <scope>FUNCTION</scope>
    <scope>CATALYTIC ACTIVITY</scope>
    <scope>INDUCTION</scope>
    <scope>DISRUPTION PHENOTYPE</scope>
    <source>
        <strain>ATCC 34438 / CBS 4732 / DSM 70277 / JCM 3621 / NBRC 1476 / NRRL Y-5445</strain>
    </source>
</reference>